<keyword id="KW-1185">Reference proteome</keyword>
<keyword id="KW-0687">Ribonucleoprotein</keyword>
<keyword id="KW-0689">Ribosomal protein</keyword>
<keyword id="KW-0694">RNA-binding</keyword>
<keyword id="KW-0699">rRNA-binding</keyword>
<reference key="1">
    <citation type="journal article" date="2008" name="J. Bacteriol.">
        <title>Complete genome sequence of uropathogenic Proteus mirabilis, a master of both adherence and motility.</title>
        <authorList>
            <person name="Pearson M.M."/>
            <person name="Sebaihia M."/>
            <person name="Churcher C."/>
            <person name="Quail M.A."/>
            <person name="Seshasayee A.S."/>
            <person name="Luscombe N.M."/>
            <person name="Abdellah Z."/>
            <person name="Arrosmith C."/>
            <person name="Atkin B."/>
            <person name="Chillingworth T."/>
            <person name="Hauser H."/>
            <person name="Jagels K."/>
            <person name="Moule S."/>
            <person name="Mungall K."/>
            <person name="Norbertczak H."/>
            <person name="Rabbinowitsch E."/>
            <person name="Walker D."/>
            <person name="Whithead S."/>
            <person name="Thomson N.R."/>
            <person name="Rather P.N."/>
            <person name="Parkhill J."/>
            <person name="Mobley H.L.T."/>
        </authorList>
    </citation>
    <scope>NUCLEOTIDE SEQUENCE [LARGE SCALE GENOMIC DNA]</scope>
    <source>
        <strain>HI4320</strain>
    </source>
</reference>
<organism>
    <name type="scientific">Proteus mirabilis (strain HI4320)</name>
    <dbReference type="NCBI Taxonomy" id="529507"/>
    <lineage>
        <taxon>Bacteria</taxon>
        <taxon>Pseudomonadati</taxon>
        <taxon>Pseudomonadota</taxon>
        <taxon>Gammaproteobacteria</taxon>
        <taxon>Enterobacterales</taxon>
        <taxon>Morganellaceae</taxon>
        <taxon>Proteus</taxon>
    </lineage>
</organism>
<gene>
    <name evidence="1" type="primary">rplD</name>
    <name type="ordered locus">PMI3256</name>
</gene>
<evidence type="ECO:0000255" key="1">
    <source>
        <dbReference type="HAMAP-Rule" id="MF_01328"/>
    </source>
</evidence>
<evidence type="ECO:0000256" key="2">
    <source>
        <dbReference type="SAM" id="MobiDB-lite"/>
    </source>
</evidence>
<evidence type="ECO:0000305" key="3"/>
<name>RL4_PROMH</name>
<protein>
    <recommendedName>
        <fullName evidence="1">Large ribosomal subunit protein uL4</fullName>
    </recommendedName>
    <alternativeName>
        <fullName evidence="3">50S ribosomal protein L4</fullName>
    </alternativeName>
</protein>
<feature type="chain" id="PRO_1000142170" description="Large ribosomal subunit protein uL4">
    <location>
        <begin position="1"/>
        <end position="201"/>
    </location>
</feature>
<feature type="region of interest" description="Disordered" evidence="2">
    <location>
        <begin position="44"/>
        <end position="71"/>
    </location>
</feature>
<comment type="function">
    <text evidence="1">One of the primary rRNA binding proteins, this protein initially binds near the 5'-end of the 23S rRNA. It is important during the early stages of 50S assembly. It makes multiple contacts with different domains of the 23S rRNA in the assembled 50S subunit and ribosome.</text>
</comment>
<comment type="function">
    <text evidence="1">Forms part of the polypeptide exit tunnel.</text>
</comment>
<comment type="subunit">
    <text evidence="1">Part of the 50S ribosomal subunit.</text>
</comment>
<comment type="similarity">
    <text evidence="1">Belongs to the universal ribosomal protein uL4 family.</text>
</comment>
<sequence length="201" mass="22061">MELVMKDAQGALTVSETTFGRDFNEALVHQVVVAYAAGARQGTRAQKTRAEVSGSGKKPWRQKGTGRARSGSIKSPIWRSGGVSFAAKPQDHSQKVNKKMYRGALKSILSELVRQDRLIVVEKFSVEAPKTKLLAQKLKDMALEDVLIVTAEVDENLYLAARNLYKVDVRDAATIDPVSLIAFDKVVMTADAVKQVEEMLA</sequence>
<dbReference type="EMBL" id="AM942759">
    <property type="protein sequence ID" value="CAR46382.1"/>
    <property type="molecule type" value="Genomic_DNA"/>
</dbReference>
<dbReference type="RefSeq" id="WP_004246964.1">
    <property type="nucleotide sequence ID" value="NC_010554.1"/>
</dbReference>
<dbReference type="SMR" id="B4F1I5"/>
<dbReference type="EnsemblBacteria" id="CAR46382">
    <property type="protein sequence ID" value="CAR46382"/>
    <property type="gene ID" value="PMI3256"/>
</dbReference>
<dbReference type="GeneID" id="6800577"/>
<dbReference type="KEGG" id="pmr:PMI3256"/>
<dbReference type="eggNOG" id="COG0088">
    <property type="taxonomic scope" value="Bacteria"/>
</dbReference>
<dbReference type="HOGENOM" id="CLU_041575_5_2_6"/>
<dbReference type="Proteomes" id="UP000008319">
    <property type="component" value="Chromosome"/>
</dbReference>
<dbReference type="GO" id="GO:1990904">
    <property type="term" value="C:ribonucleoprotein complex"/>
    <property type="evidence" value="ECO:0007669"/>
    <property type="project" value="UniProtKB-KW"/>
</dbReference>
<dbReference type="GO" id="GO:0005840">
    <property type="term" value="C:ribosome"/>
    <property type="evidence" value="ECO:0007669"/>
    <property type="project" value="UniProtKB-KW"/>
</dbReference>
<dbReference type="GO" id="GO:0019843">
    <property type="term" value="F:rRNA binding"/>
    <property type="evidence" value="ECO:0007669"/>
    <property type="project" value="UniProtKB-UniRule"/>
</dbReference>
<dbReference type="GO" id="GO:0003735">
    <property type="term" value="F:structural constituent of ribosome"/>
    <property type="evidence" value="ECO:0007669"/>
    <property type="project" value="InterPro"/>
</dbReference>
<dbReference type="GO" id="GO:0006412">
    <property type="term" value="P:translation"/>
    <property type="evidence" value="ECO:0007669"/>
    <property type="project" value="UniProtKB-UniRule"/>
</dbReference>
<dbReference type="FunFam" id="3.40.1370.10:FF:000001">
    <property type="entry name" value="50S ribosomal protein L4"/>
    <property type="match status" value="1"/>
</dbReference>
<dbReference type="Gene3D" id="3.40.1370.10">
    <property type="match status" value="1"/>
</dbReference>
<dbReference type="HAMAP" id="MF_01328_B">
    <property type="entry name" value="Ribosomal_uL4_B"/>
    <property type="match status" value="1"/>
</dbReference>
<dbReference type="InterPro" id="IPR002136">
    <property type="entry name" value="Ribosomal_uL4"/>
</dbReference>
<dbReference type="InterPro" id="IPR013005">
    <property type="entry name" value="Ribosomal_uL4-like"/>
</dbReference>
<dbReference type="InterPro" id="IPR023574">
    <property type="entry name" value="Ribosomal_uL4_dom_sf"/>
</dbReference>
<dbReference type="NCBIfam" id="TIGR03953">
    <property type="entry name" value="rplD_bact"/>
    <property type="match status" value="1"/>
</dbReference>
<dbReference type="PANTHER" id="PTHR10746">
    <property type="entry name" value="50S RIBOSOMAL PROTEIN L4"/>
    <property type="match status" value="1"/>
</dbReference>
<dbReference type="PANTHER" id="PTHR10746:SF6">
    <property type="entry name" value="LARGE RIBOSOMAL SUBUNIT PROTEIN UL4M"/>
    <property type="match status" value="1"/>
</dbReference>
<dbReference type="Pfam" id="PF00573">
    <property type="entry name" value="Ribosomal_L4"/>
    <property type="match status" value="1"/>
</dbReference>
<dbReference type="SUPFAM" id="SSF52166">
    <property type="entry name" value="Ribosomal protein L4"/>
    <property type="match status" value="1"/>
</dbReference>
<accession>B4F1I5</accession>
<proteinExistence type="inferred from homology"/>